<name>SFSA_HAEIN</name>
<sequence length="238" mass="26933">MQLPALQSATLIRRYKRFLADIELPTGDVMTIHCANTGAMTGCGEKGDKIWYSHSDSQTRKYPHSWELTQLANGQLCCINTHRSNQLVFEALQNKQIKELAMYDEIYPEVKYGEENSRIDFLLKGEGLLDCYVEVKSITLVKGNLGMSPDAVTTRGQKHVRELLAMKKQGHRAVVLFAGLHNGFDRFKIAEYIDPEYDRLLKEAMEQGVEAYAYAGQFEISNEIPTALSLTESVSYIK</sequence>
<feature type="chain" id="PRO_0000152289" description="Sugar fermentation stimulation protein homolog">
    <location>
        <begin position="1"/>
        <end position="238"/>
    </location>
</feature>
<accession>P46457</accession>
<organism>
    <name type="scientific">Haemophilus influenzae (strain ATCC 51907 / DSM 11121 / KW20 / Rd)</name>
    <dbReference type="NCBI Taxonomy" id="71421"/>
    <lineage>
        <taxon>Bacteria</taxon>
        <taxon>Pseudomonadati</taxon>
        <taxon>Pseudomonadota</taxon>
        <taxon>Gammaproteobacteria</taxon>
        <taxon>Pasteurellales</taxon>
        <taxon>Pasteurellaceae</taxon>
        <taxon>Haemophilus</taxon>
    </lineage>
</organism>
<protein>
    <recommendedName>
        <fullName evidence="1">Sugar fermentation stimulation protein homolog</fullName>
    </recommendedName>
</protein>
<keyword id="KW-1185">Reference proteome</keyword>
<reference key="1">
    <citation type="journal article" date="1995" name="Science">
        <title>Whole-genome random sequencing and assembly of Haemophilus influenzae Rd.</title>
        <authorList>
            <person name="Fleischmann R.D."/>
            <person name="Adams M.D."/>
            <person name="White O."/>
            <person name="Clayton R.A."/>
            <person name="Kirkness E.F."/>
            <person name="Kerlavage A.R."/>
            <person name="Bult C.J."/>
            <person name="Tomb J.-F."/>
            <person name="Dougherty B.A."/>
            <person name="Merrick J.M."/>
            <person name="McKenney K."/>
            <person name="Sutton G.G."/>
            <person name="FitzHugh W."/>
            <person name="Fields C.A."/>
            <person name="Gocayne J.D."/>
            <person name="Scott J.D."/>
            <person name="Shirley R."/>
            <person name="Liu L.-I."/>
            <person name="Glodek A."/>
            <person name="Kelley J.M."/>
            <person name="Weidman J.F."/>
            <person name="Phillips C.A."/>
            <person name="Spriggs T."/>
            <person name="Hedblom E."/>
            <person name="Cotton M.D."/>
            <person name="Utterback T.R."/>
            <person name="Hanna M.C."/>
            <person name="Nguyen D.T."/>
            <person name="Saudek D.M."/>
            <person name="Brandon R.C."/>
            <person name="Fine L.D."/>
            <person name="Fritchman J.L."/>
            <person name="Fuhrmann J.L."/>
            <person name="Geoghagen N.S.M."/>
            <person name="Gnehm C.L."/>
            <person name="McDonald L.A."/>
            <person name="Small K.V."/>
            <person name="Fraser C.M."/>
            <person name="Smith H.O."/>
            <person name="Venter J.C."/>
        </authorList>
    </citation>
    <scope>NUCLEOTIDE SEQUENCE [LARGE SCALE GENOMIC DNA]</scope>
    <source>
        <strain>ATCC 51907 / DSM 11121 / KW20 / Rd</strain>
    </source>
</reference>
<proteinExistence type="inferred from homology"/>
<dbReference type="EMBL" id="L42023">
    <property type="protein sequence ID" value="AAC23255.1"/>
    <property type="molecule type" value="Genomic_DNA"/>
</dbReference>
<dbReference type="RefSeq" id="NP_439753.1">
    <property type="nucleotide sequence ID" value="NC_000907.1"/>
</dbReference>
<dbReference type="SMR" id="P46457"/>
<dbReference type="STRING" id="71421.HI_1611"/>
<dbReference type="DNASU" id="950840"/>
<dbReference type="EnsemblBacteria" id="AAC23255">
    <property type="protein sequence ID" value="AAC23255"/>
    <property type="gene ID" value="HI_1611"/>
</dbReference>
<dbReference type="KEGG" id="hin:HI_1611"/>
<dbReference type="PATRIC" id="fig|71421.8.peg.1684"/>
<dbReference type="eggNOG" id="COG1489">
    <property type="taxonomic scope" value="Bacteria"/>
</dbReference>
<dbReference type="HOGENOM" id="CLU_052299_2_0_6"/>
<dbReference type="OrthoDB" id="9802365at2"/>
<dbReference type="PhylomeDB" id="P46457"/>
<dbReference type="BioCyc" id="HINF71421:G1GJ1-1624-MONOMER"/>
<dbReference type="Proteomes" id="UP000000579">
    <property type="component" value="Chromosome"/>
</dbReference>
<dbReference type="GO" id="GO:0003677">
    <property type="term" value="F:DNA binding"/>
    <property type="evidence" value="ECO:0000318"/>
    <property type="project" value="GO_Central"/>
</dbReference>
<dbReference type="CDD" id="cd22359">
    <property type="entry name" value="SfsA-like_bacterial"/>
    <property type="match status" value="1"/>
</dbReference>
<dbReference type="FunFam" id="2.40.50.580:FF:000001">
    <property type="entry name" value="Sugar fermentation stimulation protein A"/>
    <property type="match status" value="1"/>
</dbReference>
<dbReference type="FunFam" id="3.40.1350.60:FF:000001">
    <property type="entry name" value="Sugar fermentation stimulation protein A"/>
    <property type="match status" value="1"/>
</dbReference>
<dbReference type="Gene3D" id="2.40.50.580">
    <property type="match status" value="1"/>
</dbReference>
<dbReference type="Gene3D" id="3.40.1350.60">
    <property type="match status" value="1"/>
</dbReference>
<dbReference type="HAMAP" id="MF_00095">
    <property type="entry name" value="SfsA"/>
    <property type="match status" value="1"/>
</dbReference>
<dbReference type="InterPro" id="IPR005224">
    <property type="entry name" value="SfsA"/>
</dbReference>
<dbReference type="InterPro" id="IPR040452">
    <property type="entry name" value="SfsA_C"/>
</dbReference>
<dbReference type="InterPro" id="IPR041465">
    <property type="entry name" value="SfsA_N"/>
</dbReference>
<dbReference type="NCBIfam" id="TIGR00230">
    <property type="entry name" value="sfsA"/>
    <property type="match status" value="1"/>
</dbReference>
<dbReference type="PANTHER" id="PTHR30545">
    <property type="entry name" value="SUGAR FERMENTATION STIMULATION PROTEIN A"/>
    <property type="match status" value="1"/>
</dbReference>
<dbReference type="PANTHER" id="PTHR30545:SF2">
    <property type="entry name" value="SUGAR FERMENTATION STIMULATION PROTEIN A"/>
    <property type="match status" value="1"/>
</dbReference>
<dbReference type="Pfam" id="PF03749">
    <property type="entry name" value="SfsA"/>
    <property type="match status" value="1"/>
</dbReference>
<dbReference type="Pfam" id="PF17746">
    <property type="entry name" value="SfsA_N"/>
    <property type="match status" value="1"/>
</dbReference>
<gene>
    <name evidence="1" type="primary">sfsA</name>
    <name type="ordered locus">HI_1611</name>
</gene>
<comment type="similarity">
    <text evidence="1">Belongs to the SfsA family.</text>
</comment>
<evidence type="ECO:0000255" key="1">
    <source>
        <dbReference type="HAMAP-Rule" id="MF_00095"/>
    </source>
</evidence>